<organism>
    <name type="scientific">Ectatomma brunneum</name>
    <name type="common">Ant</name>
    <name type="synonym">Ectatomma quadridens</name>
    <dbReference type="NCBI Taxonomy" id="369127"/>
    <lineage>
        <taxon>Eukaryota</taxon>
        <taxon>Metazoa</taxon>
        <taxon>Ecdysozoa</taxon>
        <taxon>Arthropoda</taxon>
        <taxon>Hexapoda</taxon>
        <taxon>Insecta</taxon>
        <taxon>Pterygota</taxon>
        <taxon>Neoptera</taxon>
        <taxon>Endopterygota</taxon>
        <taxon>Hymenoptera</taxon>
        <taxon>Apocrita</taxon>
        <taxon>Aculeata</taxon>
        <taxon>Formicoidea</taxon>
        <taxon>Formicidae</taxon>
        <taxon>Ectatomminae</taxon>
        <taxon>Ectatommini</taxon>
        <taxon>Ectatomma</taxon>
    </lineage>
</organism>
<feature type="chain" id="PRO_0000447102" description="U1-ectatotoxin-Eb1a subunit A" evidence="4">
    <location>
        <begin position="1"/>
        <end position="40"/>
    </location>
</feature>
<feature type="disulfide bond" description="Interchain (with C-34 in subunit B)" evidence="4">
    <location>
        <position position="37"/>
    </location>
</feature>
<accession>P0DSK8</accession>
<evidence type="ECO:0000303" key="1">
    <source>
    </source>
</evidence>
<evidence type="ECO:0000303" key="2">
    <source>
    </source>
</evidence>
<evidence type="ECO:0000305" key="3"/>
<evidence type="ECO:0000305" key="4">
    <source>
    </source>
</evidence>
<name>TX1AA_ECTBR</name>
<proteinExistence type="evidence at protein level"/>
<protein>
    <recommendedName>
        <fullName evidence="2">U1-ectatotoxin-Eb1a subunit A</fullName>
        <shortName evidence="2">U1-ECTX-Eb1a subunit A</shortName>
    </recommendedName>
    <alternativeName>
        <fullName evidence="1">Ectatomin-Eq1 subunit A</fullName>
    </alternativeName>
</protein>
<keyword id="KW-0903">Direct protein sequencing</keyword>
<keyword id="KW-1015">Disulfide bond</keyword>
<keyword id="KW-0472">Membrane</keyword>
<keyword id="KW-0964">Secreted</keyword>
<keyword id="KW-1052">Target cell membrane</keyword>
<keyword id="KW-1053">Target membrane</keyword>
<keyword id="KW-0800">Toxin</keyword>
<comment type="subunit">
    <text evidence="4">Heterodimer of subunits A and B; disulfide-linked.</text>
</comment>
<comment type="subcellular location">
    <subcellularLocation>
        <location evidence="4">Secreted</location>
    </subcellularLocation>
    <subcellularLocation>
        <location evidence="4">Target cell membrane</location>
    </subcellularLocation>
</comment>
<comment type="tissue specificity">
    <text evidence="4">Expressed by the venom gland.</text>
</comment>
<comment type="similarity">
    <text evidence="3">Belongs to the ectatomin family. Ectatomin-Eq subfamily.</text>
</comment>
<reference key="1">
    <citation type="journal article" date="2014" name="Toxicon">
        <title>Diversity of peptide toxins from stinging ant venoms.</title>
        <authorList>
            <person name="Aili S.R."/>
            <person name="Touchard A."/>
            <person name="Escoubas P."/>
            <person name="Padula M.P."/>
            <person name="Orivel J."/>
            <person name="Dejean A."/>
            <person name="Nicholson G.M."/>
        </authorList>
    </citation>
    <scope>REVIEW</scope>
    <scope>PROTEIN SEQUENCE</scope>
</reference>
<reference key="2">
    <citation type="journal article" date="2016" name="Toxins">
        <title>The biochemical toxin arsenal from ant venoms.</title>
        <authorList>
            <person name="Touchard A."/>
            <person name="Aili S.R."/>
            <person name="Fox E.G."/>
            <person name="Escoubas P."/>
            <person name="Orivel J."/>
            <person name="Nicholson G.M."/>
            <person name="Dejean A."/>
        </authorList>
    </citation>
    <scope>REVIEW</scope>
    <scope>NOMENCLATURE</scope>
</reference>
<sequence>INFGAIKAILKKWGKKLVEYALKHKDLYAPYIKKHLCEKL</sequence>
<dbReference type="SMR" id="P0DSK8"/>
<dbReference type="GO" id="GO:0005576">
    <property type="term" value="C:extracellular region"/>
    <property type="evidence" value="ECO:0007669"/>
    <property type="project" value="UniProtKB-SubCell"/>
</dbReference>
<dbReference type="GO" id="GO:0016020">
    <property type="term" value="C:membrane"/>
    <property type="evidence" value="ECO:0007669"/>
    <property type="project" value="UniProtKB-KW"/>
</dbReference>
<dbReference type="GO" id="GO:0044218">
    <property type="term" value="C:other organism cell membrane"/>
    <property type="evidence" value="ECO:0007669"/>
    <property type="project" value="UniProtKB-KW"/>
</dbReference>
<dbReference type="GO" id="GO:0090729">
    <property type="term" value="F:toxin activity"/>
    <property type="evidence" value="ECO:0007669"/>
    <property type="project" value="UniProtKB-KW"/>
</dbReference>